<sequence>MTLIVTGAAGFIGANIVKALNERGETRIIAVDNLTRADKFRNLVDCEIDDYLDKTEFVERFARGDFGKVRAVFHEGACSDTMETDGRYMMDNNFRYSRAVLDTCLMQGTQFLYASSAAIYGGSTRFVEERDVEAPLNVYGYSKFLFDQVIRRVLPSAKSQIAGFRYFNVYGPRETHKGRMASVAFHNFNQFRAEGKVKLFGEYNGYAPGEQTRDFVSVEDVTKVNLFFFDHPEKSGIFNLGTGRAQPFNDIASTVVNTLRALDNQPPLTLAQQVEQGLIEYVPFPDALRGKYQCFTQADQTKLRAAGYDAPFLTVQEGVDRYVRWLSGQV</sequence>
<accession>B4EB34</accession>
<organism>
    <name type="scientific">Burkholderia cenocepacia (strain ATCC BAA-245 / DSM 16553 / LMG 16656 / NCTC 13227 / J2315 / CF5610)</name>
    <name type="common">Burkholderia cepacia (strain J2315)</name>
    <dbReference type="NCBI Taxonomy" id="216591"/>
    <lineage>
        <taxon>Bacteria</taxon>
        <taxon>Pseudomonadati</taxon>
        <taxon>Pseudomonadota</taxon>
        <taxon>Betaproteobacteria</taxon>
        <taxon>Burkholderiales</taxon>
        <taxon>Burkholderiaceae</taxon>
        <taxon>Burkholderia</taxon>
        <taxon>Burkholderia cepacia complex</taxon>
    </lineage>
</organism>
<reference key="1">
    <citation type="journal article" date="2009" name="J. Bacteriol.">
        <title>The genome of Burkholderia cenocepacia J2315, an epidemic pathogen of cystic fibrosis patients.</title>
        <authorList>
            <person name="Holden M.T."/>
            <person name="Seth-Smith H.M."/>
            <person name="Crossman L.C."/>
            <person name="Sebaihia M."/>
            <person name="Bentley S.D."/>
            <person name="Cerdeno-Tarraga A.M."/>
            <person name="Thomson N.R."/>
            <person name="Bason N."/>
            <person name="Quail M.A."/>
            <person name="Sharp S."/>
            <person name="Cherevach I."/>
            <person name="Churcher C."/>
            <person name="Goodhead I."/>
            <person name="Hauser H."/>
            <person name="Holroyd N."/>
            <person name="Mungall K."/>
            <person name="Scott P."/>
            <person name="Walker D."/>
            <person name="White B."/>
            <person name="Rose H."/>
            <person name="Iversen P."/>
            <person name="Mil-Homens D."/>
            <person name="Rocha E.P."/>
            <person name="Fialho A.M."/>
            <person name="Baldwin A."/>
            <person name="Dowson C."/>
            <person name="Barrell B.G."/>
            <person name="Govan J.R."/>
            <person name="Vandamme P."/>
            <person name="Hart C.A."/>
            <person name="Mahenthiralingam E."/>
            <person name="Parkhill J."/>
        </authorList>
    </citation>
    <scope>NUCLEOTIDE SEQUENCE [LARGE SCALE GENOMIC DNA]</scope>
    <source>
        <strain>ATCC BAA-245 / DSM 16553 / LMG 16656 / NCTC 13227 / J2315 / CF5610</strain>
    </source>
</reference>
<gene>
    <name evidence="1" type="primary">hldD</name>
    <name type="ordered locus">BceJ2315_28800</name>
    <name type="ORF">BCAL2944</name>
</gene>
<evidence type="ECO:0000255" key="1">
    <source>
        <dbReference type="HAMAP-Rule" id="MF_01601"/>
    </source>
</evidence>
<proteinExistence type="inferred from homology"/>
<protein>
    <recommendedName>
        <fullName evidence="1">ADP-L-glycero-D-manno-heptose-6-epimerase</fullName>
        <ecNumber evidence="1">5.1.3.20</ecNumber>
    </recommendedName>
    <alternativeName>
        <fullName evidence="1">ADP-L-glycero-beta-D-manno-heptose-6-epimerase</fullName>
        <shortName evidence="1">ADP-glyceromanno-heptose 6-epimerase</shortName>
        <shortName evidence="1">ADP-hep 6-epimerase</shortName>
        <shortName evidence="1">AGME</shortName>
    </alternativeName>
</protein>
<keyword id="KW-0119">Carbohydrate metabolism</keyword>
<keyword id="KW-0413">Isomerase</keyword>
<keyword id="KW-0521">NADP</keyword>
<comment type="function">
    <text evidence="1">Catalyzes the interconversion between ADP-D-glycero-beta-D-manno-heptose and ADP-L-glycero-beta-D-manno-heptose via an epimerization at carbon 6 of the heptose.</text>
</comment>
<comment type="catalytic activity">
    <reaction evidence="1">
        <text>ADP-D-glycero-beta-D-manno-heptose = ADP-L-glycero-beta-D-manno-heptose</text>
        <dbReference type="Rhea" id="RHEA:17577"/>
        <dbReference type="ChEBI" id="CHEBI:59967"/>
        <dbReference type="ChEBI" id="CHEBI:61506"/>
        <dbReference type="EC" id="5.1.3.20"/>
    </reaction>
</comment>
<comment type="cofactor">
    <cofactor evidence="1">
        <name>NADP(+)</name>
        <dbReference type="ChEBI" id="CHEBI:58349"/>
    </cofactor>
    <text evidence="1">Binds 1 NADP(+) per subunit.</text>
</comment>
<comment type="pathway">
    <text evidence="1">Nucleotide-sugar biosynthesis; ADP-L-glycero-beta-D-manno-heptose biosynthesis; ADP-L-glycero-beta-D-manno-heptose from D-glycero-beta-D-manno-heptose 7-phosphate: step 4/4.</text>
</comment>
<comment type="subunit">
    <text evidence="1">Homopentamer.</text>
</comment>
<comment type="domain">
    <text evidence="1">Contains a large N-terminal NADP-binding domain, and a smaller C-terminal substrate-binding domain.</text>
</comment>
<comment type="similarity">
    <text evidence="1">Belongs to the NAD(P)-dependent epimerase/dehydratase family. HldD subfamily.</text>
</comment>
<feature type="chain" id="PRO_1000190397" description="ADP-L-glycero-D-manno-heptose-6-epimerase">
    <location>
        <begin position="1"/>
        <end position="330"/>
    </location>
</feature>
<feature type="active site" description="Proton acceptor" evidence="1">
    <location>
        <position position="139"/>
    </location>
</feature>
<feature type="active site" description="Proton acceptor" evidence="1">
    <location>
        <position position="177"/>
    </location>
</feature>
<feature type="binding site" evidence="1">
    <location>
        <begin position="11"/>
        <end position="12"/>
    </location>
    <ligand>
        <name>NADP(+)</name>
        <dbReference type="ChEBI" id="CHEBI:58349"/>
    </ligand>
</feature>
<feature type="binding site" evidence="1">
    <location>
        <begin position="32"/>
        <end position="33"/>
    </location>
    <ligand>
        <name>NADP(+)</name>
        <dbReference type="ChEBI" id="CHEBI:58349"/>
    </ligand>
</feature>
<feature type="binding site" evidence="1">
    <location>
        <position position="39"/>
    </location>
    <ligand>
        <name>NADP(+)</name>
        <dbReference type="ChEBI" id="CHEBI:58349"/>
    </ligand>
</feature>
<feature type="binding site" evidence="1">
    <location>
        <position position="54"/>
    </location>
    <ligand>
        <name>NADP(+)</name>
        <dbReference type="ChEBI" id="CHEBI:58349"/>
    </ligand>
</feature>
<feature type="binding site" evidence="1">
    <location>
        <begin position="75"/>
        <end position="79"/>
    </location>
    <ligand>
        <name>NADP(+)</name>
        <dbReference type="ChEBI" id="CHEBI:58349"/>
    </ligand>
</feature>
<feature type="binding site" evidence="1">
    <location>
        <position position="92"/>
    </location>
    <ligand>
        <name>NADP(+)</name>
        <dbReference type="ChEBI" id="CHEBI:58349"/>
    </ligand>
</feature>
<feature type="binding site" evidence="1">
    <location>
        <position position="143"/>
    </location>
    <ligand>
        <name>NADP(+)</name>
        <dbReference type="ChEBI" id="CHEBI:58349"/>
    </ligand>
</feature>
<feature type="binding site" evidence="1">
    <location>
        <position position="168"/>
    </location>
    <ligand>
        <name>substrate</name>
    </ligand>
</feature>
<feature type="binding site" evidence="1">
    <location>
        <position position="169"/>
    </location>
    <ligand>
        <name>NADP(+)</name>
        <dbReference type="ChEBI" id="CHEBI:58349"/>
    </ligand>
</feature>
<feature type="binding site" evidence="1">
    <location>
        <position position="177"/>
    </location>
    <ligand>
        <name>NADP(+)</name>
        <dbReference type="ChEBI" id="CHEBI:58349"/>
    </ligand>
</feature>
<feature type="binding site" evidence="1">
    <location>
        <position position="179"/>
    </location>
    <ligand>
        <name>substrate</name>
    </ligand>
</feature>
<feature type="binding site" evidence="1">
    <location>
        <position position="186"/>
    </location>
    <ligand>
        <name>substrate</name>
    </ligand>
</feature>
<feature type="binding site" evidence="1">
    <location>
        <begin position="200"/>
        <end position="203"/>
    </location>
    <ligand>
        <name>substrate</name>
    </ligand>
</feature>
<feature type="binding site" evidence="1">
    <location>
        <position position="213"/>
    </location>
    <ligand>
        <name>substrate</name>
    </ligand>
</feature>
<feature type="binding site" evidence="1">
    <location>
        <position position="292"/>
    </location>
    <ligand>
        <name>substrate</name>
    </ligand>
</feature>
<name>HLDD_BURCJ</name>
<dbReference type="EC" id="5.1.3.20" evidence="1"/>
<dbReference type="EMBL" id="AM747720">
    <property type="protein sequence ID" value="CAR53245.1"/>
    <property type="molecule type" value="Genomic_DNA"/>
</dbReference>
<dbReference type="SMR" id="B4EB34"/>
<dbReference type="KEGG" id="bcj:BCAL2944"/>
<dbReference type="eggNOG" id="COG0451">
    <property type="taxonomic scope" value="Bacteria"/>
</dbReference>
<dbReference type="HOGENOM" id="CLU_007383_1_3_4"/>
<dbReference type="BioCyc" id="BCEN216591:G1G1V-3253-MONOMER"/>
<dbReference type="UniPathway" id="UPA00356">
    <property type="reaction ID" value="UER00440"/>
</dbReference>
<dbReference type="Proteomes" id="UP000001035">
    <property type="component" value="Chromosome 1"/>
</dbReference>
<dbReference type="GO" id="GO:0008712">
    <property type="term" value="F:ADP-glyceromanno-heptose 6-epimerase activity"/>
    <property type="evidence" value="ECO:0007669"/>
    <property type="project" value="UniProtKB-UniRule"/>
</dbReference>
<dbReference type="GO" id="GO:0050661">
    <property type="term" value="F:NADP binding"/>
    <property type="evidence" value="ECO:0007669"/>
    <property type="project" value="InterPro"/>
</dbReference>
<dbReference type="GO" id="GO:0097171">
    <property type="term" value="P:ADP-L-glycero-beta-D-manno-heptose biosynthetic process"/>
    <property type="evidence" value="ECO:0007669"/>
    <property type="project" value="UniProtKB-UniPathway"/>
</dbReference>
<dbReference type="GO" id="GO:0005975">
    <property type="term" value="P:carbohydrate metabolic process"/>
    <property type="evidence" value="ECO:0007669"/>
    <property type="project" value="UniProtKB-UniRule"/>
</dbReference>
<dbReference type="CDD" id="cd05248">
    <property type="entry name" value="ADP_GME_SDR_e"/>
    <property type="match status" value="1"/>
</dbReference>
<dbReference type="Gene3D" id="3.40.50.720">
    <property type="entry name" value="NAD(P)-binding Rossmann-like Domain"/>
    <property type="match status" value="1"/>
</dbReference>
<dbReference type="Gene3D" id="3.90.25.10">
    <property type="entry name" value="UDP-galactose 4-epimerase, domain 1"/>
    <property type="match status" value="1"/>
</dbReference>
<dbReference type="HAMAP" id="MF_01601">
    <property type="entry name" value="Heptose_epimerase"/>
    <property type="match status" value="1"/>
</dbReference>
<dbReference type="InterPro" id="IPR001509">
    <property type="entry name" value="Epimerase_deHydtase"/>
</dbReference>
<dbReference type="InterPro" id="IPR011912">
    <property type="entry name" value="Heptose_epim"/>
</dbReference>
<dbReference type="InterPro" id="IPR036291">
    <property type="entry name" value="NAD(P)-bd_dom_sf"/>
</dbReference>
<dbReference type="NCBIfam" id="TIGR02197">
    <property type="entry name" value="heptose_epim"/>
    <property type="match status" value="1"/>
</dbReference>
<dbReference type="PANTHER" id="PTHR43103:SF3">
    <property type="entry name" value="ADP-L-GLYCERO-D-MANNO-HEPTOSE-6-EPIMERASE"/>
    <property type="match status" value="1"/>
</dbReference>
<dbReference type="PANTHER" id="PTHR43103">
    <property type="entry name" value="NUCLEOSIDE-DIPHOSPHATE-SUGAR EPIMERASE"/>
    <property type="match status" value="1"/>
</dbReference>
<dbReference type="Pfam" id="PF01370">
    <property type="entry name" value="Epimerase"/>
    <property type="match status" value="1"/>
</dbReference>
<dbReference type="SUPFAM" id="SSF51735">
    <property type="entry name" value="NAD(P)-binding Rossmann-fold domains"/>
    <property type="match status" value="1"/>
</dbReference>